<name>TNT_HUMAN</name>
<sequence>MSLVPGQHCSPSHTRLHLTSPITMGTEPATQNTEFSKGSLIYGVTSPQRGHSQHSEASQGPLSLDKPLQLPPIFLEGEKGESSVQNEQEGEPSLQSPSLELQSPAWPRHAGVAQEPLKVSSSYLSDTQSSESHVSSVQHPRPEEGSHASLSSGYAGDKEGSDISLVGSHRRVRLNRRLNTQAASNQTSQLGSIDPPSSLKSRLTGPAHSTKQTGGKE</sequence>
<dbReference type="EMBL" id="AF536240">
    <property type="protein sequence ID" value="AAP97728.1"/>
    <property type="molecule type" value="mRNA"/>
</dbReference>
<dbReference type="EMBL" id="AC092725">
    <property type="status" value="NOT_ANNOTATED_CDS"/>
    <property type="molecule type" value="Genomic_DNA"/>
</dbReference>
<dbReference type="EMBL" id="CH471145">
    <property type="protein sequence ID" value="EAW55761.1"/>
    <property type="molecule type" value="Genomic_DNA"/>
</dbReference>
<dbReference type="EMBL" id="BC031257">
    <property type="protein sequence ID" value="AAH31257.1"/>
    <property type="molecule type" value="mRNA"/>
</dbReference>
<dbReference type="EMBL" id="BC136370">
    <property type="protein sequence ID" value="AAI36371.1"/>
    <property type="molecule type" value="mRNA"/>
</dbReference>
<dbReference type="EMBL" id="BC136382">
    <property type="protein sequence ID" value="AAI36383.1"/>
    <property type="molecule type" value="mRNA"/>
</dbReference>
<dbReference type="RefSeq" id="NP_001139017.1">
    <property type="nucleotide sequence ID" value="NM_001145545.1"/>
</dbReference>
<dbReference type="BioGRID" id="127809">
    <property type="interactions" value="1"/>
</dbReference>
<dbReference type="iPTMnet" id="Q7Z2V1"/>
<dbReference type="PhosphoSitePlus" id="Q7Z2V1"/>
<dbReference type="BioMuta" id="C16orf82"/>
<dbReference type="MassIVE" id="Q7Z2V1"/>
<dbReference type="ProteomicsDB" id="68969"/>
<dbReference type="DNASU" id="162083"/>
<dbReference type="GeneID" id="162083"/>
<dbReference type="KEGG" id="hsa:162083"/>
<dbReference type="AGR" id="HGNC:30755"/>
<dbReference type="CTD" id="162083"/>
<dbReference type="DisGeNET" id="162083"/>
<dbReference type="GeneCards" id="C16orf82"/>
<dbReference type="HGNC" id="HGNC:30755">
    <property type="gene designation" value="C16orf82"/>
</dbReference>
<dbReference type="neXtProt" id="NX_Q7Z2V1"/>
<dbReference type="PharmGKB" id="PA164716846"/>
<dbReference type="InParanoid" id="Q7Z2V1"/>
<dbReference type="OrthoDB" id="9836596at2759"/>
<dbReference type="PAN-GO" id="Q7Z2V1">
    <property type="GO annotations" value="0 GO annotations based on evolutionary models"/>
</dbReference>
<dbReference type="PhylomeDB" id="Q7Z2V1"/>
<dbReference type="PathwayCommons" id="Q7Z2V1"/>
<dbReference type="BioGRID-ORCS" id="162083">
    <property type="hits" value="5 hits in 165 CRISPR screens"/>
</dbReference>
<dbReference type="ChiTaRS" id="C16orf82">
    <property type="organism name" value="human"/>
</dbReference>
<dbReference type="GenomeRNAi" id="162083"/>
<dbReference type="Pharos" id="Q7Z2V1">
    <property type="development level" value="Tdark"/>
</dbReference>
<dbReference type="PRO" id="PR:Q7Z2V1"/>
<dbReference type="Proteomes" id="UP000005640">
    <property type="component" value="Unplaced"/>
</dbReference>
<dbReference type="RNAct" id="Q7Z2V1">
    <property type="molecule type" value="protein"/>
</dbReference>
<dbReference type="InterPro" id="IPR031520">
    <property type="entry name" value="DUF4694"/>
</dbReference>
<dbReference type="PANTHER" id="PTHR40139">
    <property type="entry name" value="PROTEIN TNT"/>
    <property type="match status" value="1"/>
</dbReference>
<dbReference type="PANTHER" id="PTHR40139:SF1">
    <property type="entry name" value="PROTEIN TNT"/>
    <property type="match status" value="1"/>
</dbReference>
<dbReference type="Pfam" id="PF15765">
    <property type="entry name" value="DUF4694"/>
    <property type="match status" value="1"/>
</dbReference>
<reference key="1">
    <citation type="submission" date="2002-08" db="EMBL/GenBank/DDBJ databases">
        <authorList>
            <person name="Guo J.H."/>
            <person name="Yu L."/>
        </authorList>
    </citation>
    <scope>NUCLEOTIDE SEQUENCE [LARGE SCALE MRNA]</scope>
    <source>
        <tissue>Teratocarcinoma</tissue>
    </source>
</reference>
<reference key="2">
    <citation type="journal article" date="2004" name="Nature">
        <title>The sequence and analysis of duplication-rich human chromosome 16.</title>
        <authorList>
            <person name="Martin J."/>
            <person name="Han C."/>
            <person name="Gordon L.A."/>
            <person name="Terry A."/>
            <person name="Prabhakar S."/>
            <person name="She X."/>
            <person name="Xie G."/>
            <person name="Hellsten U."/>
            <person name="Chan Y.M."/>
            <person name="Altherr M."/>
            <person name="Couronne O."/>
            <person name="Aerts A."/>
            <person name="Bajorek E."/>
            <person name="Black S."/>
            <person name="Blumer H."/>
            <person name="Branscomb E."/>
            <person name="Brown N.C."/>
            <person name="Bruno W.J."/>
            <person name="Buckingham J.M."/>
            <person name="Callen D.F."/>
            <person name="Campbell C.S."/>
            <person name="Campbell M.L."/>
            <person name="Campbell E.W."/>
            <person name="Caoile C."/>
            <person name="Challacombe J.F."/>
            <person name="Chasteen L.A."/>
            <person name="Chertkov O."/>
            <person name="Chi H.C."/>
            <person name="Christensen M."/>
            <person name="Clark L.M."/>
            <person name="Cohn J.D."/>
            <person name="Denys M."/>
            <person name="Detter J.C."/>
            <person name="Dickson M."/>
            <person name="Dimitrijevic-Bussod M."/>
            <person name="Escobar J."/>
            <person name="Fawcett J.J."/>
            <person name="Flowers D."/>
            <person name="Fotopulos D."/>
            <person name="Glavina T."/>
            <person name="Gomez M."/>
            <person name="Gonzales E."/>
            <person name="Goodstein D."/>
            <person name="Goodwin L.A."/>
            <person name="Grady D.L."/>
            <person name="Grigoriev I."/>
            <person name="Groza M."/>
            <person name="Hammon N."/>
            <person name="Hawkins T."/>
            <person name="Haydu L."/>
            <person name="Hildebrand C.E."/>
            <person name="Huang W."/>
            <person name="Israni S."/>
            <person name="Jett J."/>
            <person name="Jewett P.B."/>
            <person name="Kadner K."/>
            <person name="Kimball H."/>
            <person name="Kobayashi A."/>
            <person name="Krawczyk M.-C."/>
            <person name="Leyba T."/>
            <person name="Longmire J.L."/>
            <person name="Lopez F."/>
            <person name="Lou Y."/>
            <person name="Lowry S."/>
            <person name="Ludeman T."/>
            <person name="Manohar C.F."/>
            <person name="Mark G.A."/>
            <person name="McMurray K.L."/>
            <person name="Meincke L.J."/>
            <person name="Morgan J."/>
            <person name="Moyzis R.K."/>
            <person name="Mundt M.O."/>
            <person name="Munk A.C."/>
            <person name="Nandkeshwar R.D."/>
            <person name="Pitluck S."/>
            <person name="Pollard M."/>
            <person name="Predki P."/>
            <person name="Parson-Quintana B."/>
            <person name="Ramirez L."/>
            <person name="Rash S."/>
            <person name="Retterer J."/>
            <person name="Ricke D.O."/>
            <person name="Robinson D.L."/>
            <person name="Rodriguez A."/>
            <person name="Salamov A."/>
            <person name="Saunders E.H."/>
            <person name="Scott D."/>
            <person name="Shough T."/>
            <person name="Stallings R.L."/>
            <person name="Stalvey M."/>
            <person name="Sutherland R.D."/>
            <person name="Tapia R."/>
            <person name="Tesmer J.G."/>
            <person name="Thayer N."/>
            <person name="Thompson L.S."/>
            <person name="Tice H."/>
            <person name="Torney D.C."/>
            <person name="Tran-Gyamfi M."/>
            <person name="Tsai M."/>
            <person name="Ulanovsky L.E."/>
            <person name="Ustaszewska A."/>
            <person name="Vo N."/>
            <person name="White P.S."/>
            <person name="Williams A.L."/>
            <person name="Wills P.L."/>
            <person name="Wu J.-R."/>
            <person name="Wu K."/>
            <person name="Yang J."/>
            <person name="DeJong P."/>
            <person name="Bruce D."/>
            <person name="Doggett N.A."/>
            <person name="Deaven L."/>
            <person name="Schmutz J."/>
            <person name="Grimwood J."/>
            <person name="Richardson P."/>
            <person name="Rokhsar D.S."/>
            <person name="Eichler E.E."/>
            <person name="Gilna P."/>
            <person name="Lucas S.M."/>
            <person name="Myers R.M."/>
            <person name="Rubin E.M."/>
            <person name="Pennacchio L.A."/>
        </authorList>
    </citation>
    <scope>NUCLEOTIDE SEQUENCE [LARGE SCALE GENOMIC DNA]</scope>
</reference>
<reference key="3">
    <citation type="submission" date="2005-09" db="EMBL/GenBank/DDBJ databases">
        <authorList>
            <person name="Mural R.J."/>
            <person name="Istrail S."/>
            <person name="Sutton G.G."/>
            <person name="Florea L."/>
            <person name="Halpern A.L."/>
            <person name="Mobarry C.M."/>
            <person name="Lippert R."/>
            <person name="Walenz B."/>
            <person name="Shatkay H."/>
            <person name="Dew I."/>
            <person name="Miller J.R."/>
            <person name="Flanigan M.J."/>
            <person name="Edwards N.J."/>
            <person name="Bolanos R."/>
            <person name="Fasulo D."/>
            <person name="Halldorsson B.V."/>
            <person name="Hannenhalli S."/>
            <person name="Turner R."/>
            <person name="Yooseph S."/>
            <person name="Lu F."/>
            <person name="Nusskern D.R."/>
            <person name="Shue B.C."/>
            <person name="Zheng X.H."/>
            <person name="Zhong F."/>
            <person name="Delcher A.L."/>
            <person name="Huson D.H."/>
            <person name="Kravitz S.A."/>
            <person name="Mouchard L."/>
            <person name="Reinert K."/>
            <person name="Remington K.A."/>
            <person name="Clark A.G."/>
            <person name="Waterman M.S."/>
            <person name="Eichler E.E."/>
            <person name="Adams M.D."/>
            <person name="Hunkapiller M.W."/>
            <person name="Myers E.W."/>
            <person name="Venter J.C."/>
        </authorList>
    </citation>
    <scope>NUCLEOTIDE SEQUENCE [LARGE SCALE GENOMIC DNA]</scope>
</reference>
<reference key="4">
    <citation type="journal article" date="2004" name="Genome Res.">
        <title>The status, quality, and expansion of the NIH full-length cDNA project: the Mammalian Gene Collection (MGC).</title>
        <authorList>
            <consortium name="The MGC Project Team"/>
        </authorList>
    </citation>
    <scope>NUCLEOTIDE SEQUENCE [LARGE SCALE MRNA]</scope>
    <source>
        <tissue>Testis</tissue>
    </source>
</reference>
<comment type="tissue specificity">
    <text>Preferentially expressed in teratocarcinoma rather than in normal testis.</text>
</comment>
<protein>
    <recommendedName>
        <fullName>Protein TNT</fullName>
    </recommendedName>
</protein>
<proteinExistence type="evidence at protein level"/>
<keyword id="KW-1267">Proteomics identification</keyword>
<keyword id="KW-1185">Reference proteome</keyword>
<gene>
    <name type="primary">C16orf82</name>
</gene>
<organism>
    <name type="scientific">Homo sapiens</name>
    <name type="common">Human</name>
    <dbReference type="NCBI Taxonomy" id="9606"/>
    <lineage>
        <taxon>Eukaryota</taxon>
        <taxon>Metazoa</taxon>
        <taxon>Chordata</taxon>
        <taxon>Craniata</taxon>
        <taxon>Vertebrata</taxon>
        <taxon>Euteleostomi</taxon>
        <taxon>Mammalia</taxon>
        <taxon>Eutheria</taxon>
        <taxon>Euarchontoglires</taxon>
        <taxon>Primates</taxon>
        <taxon>Haplorrhini</taxon>
        <taxon>Catarrhini</taxon>
        <taxon>Hominidae</taxon>
        <taxon>Homo</taxon>
    </lineage>
</organism>
<accession>Q7Z2V1</accession>
<accession>B9EGC2</accession>
<accession>Q8NEF0</accession>
<evidence type="ECO:0000256" key="1">
    <source>
        <dbReference type="SAM" id="MobiDB-lite"/>
    </source>
</evidence>
<feature type="chain" id="PRO_0000072616" description="Protein TNT">
    <location>
        <begin position="1"/>
        <end position="217"/>
    </location>
</feature>
<feature type="region of interest" description="Disordered" evidence="1">
    <location>
        <begin position="1"/>
        <end position="217"/>
    </location>
</feature>
<feature type="compositionally biased region" description="Polar residues" evidence="1">
    <location>
        <begin position="20"/>
        <end position="36"/>
    </location>
</feature>
<feature type="compositionally biased region" description="Polar residues" evidence="1">
    <location>
        <begin position="45"/>
        <end position="61"/>
    </location>
</feature>
<feature type="compositionally biased region" description="Low complexity" evidence="1">
    <location>
        <begin position="91"/>
        <end position="104"/>
    </location>
</feature>
<feature type="compositionally biased region" description="Low complexity" evidence="1">
    <location>
        <begin position="128"/>
        <end position="139"/>
    </location>
</feature>
<feature type="compositionally biased region" description="Polar residues" evidence="1">
    <location>
        <begin position="177"/>
        <end position="191"/>
    </location>
</feature>
<feature type="compositionally biased region" description="Polar residues" evidence="1">
    <location>
        <begin position="207"/>
        <end position="217"/>
    </location>
</feature>